<reference key="1">
    <citation type="journal article" date="2003" name="J. Mol. Evol.">
        <title>Molecular phylogeny and evolution of the plant-specific seven-transmembrane MLO family.</title>
        <authorList>
            <person name="Devoto A."/>
            <person name="Hartmann H.A."/>
            <person name="Piffanelli P."/>
            <person name="Elliott C."/>
            <person name="Simmons C."/>
            <person name="Taramino G."/>
            <person name="Goh C.-S."/>
            <person name="Cohen F.E."/>
            <person name="Emerson B.C."/>
            <person name="Schulze-Lefert P."/>
            <person name="Panstruga R."/>
        </authorList>
    </citation>
    <scope>NUCLEOTIDE SEQUENCE [MRNA]</scope>
</reference>
<reference key="2">
    <citation type="journal article" date="2000" name="Nature">
        <title>Sequence and analysis of chromosome 3 of the plant Arabidopsis thaliana.</title>
        <authorList>
            <person name="Salanoubat M."/>
            <person name="Lemcke K."/>
            <person name="Rieger M."/>
            <person name="Ansorge W."/>
            <person name="Unseld M."/>
            <person name="Fartmann B."/>
            <person name="Valle G."/>
            <person name="Bloecker H."/>
            <person name="Perez-Alonso M."/>
            <person name="Obermaier B."/>
            <person name="Delseny M."/>
            <person name="Boutry M."/>
            <person name="Grivell L.A."/>
            <person name="Mache R."/>
            <person name="Puigdomenech P."/>
            <person name="De Simone V."/>
            <person name="Choisne N."/>
            <person name="Artiguenave F."/>
            <person name="Robert C."/>
            <person name="Brottier P."/>
            <person name="Wincker P."/>
            <person name="Cattolico L."/>
            <person name="Weissenbach J."/>
            <person name="Saurin W."/>
            <person name="Quetier F."/>
            <person name="Schaefer M."/>
            <person name="Mueller-Auer S."/>
            <person name="Gabel C."/>
            <person name="Fuchs M."/>
            <person name="Benes V."/>
            <person name="Wurmbach E."/>
            <person name="Drzonek H."/>
            <person name="Erfle H."/>
            <person name="Jordan N."/>
            <person name="Bangert S."/>
            <person name="Wiedelmann R."/>
            <person name="Kranz H."/>
            <person name="Voss H."/>
            <person name="Holland R."/>
            <person name="Brandt P."/>
            <person name="Nyakatura G."/>
            <person name="Vezzi A."/>
            <person name="D'Angelo M."/>
            <person name="Pallavicini A."/>
            <person name="Toppo S."/>
            <person name="Simionati B."/>
            <person name="Conrad A."/>
            <person name="Hornischer K."/>
            <person name="Kauer G."/>
            <person name="Loehnert T.-H."/>
            <person name="Nordsiek G."/>
            <person name="Reichelt J."/>
            <person name="Scharfe M."/>
            <person name="Schoen O."/>
            <person name="Bargues M."/>
            <person name="Terol J."/>
            <person name="Climent J."/>
            <person name="Navarro P."/>
            <person name="Collado C."/>
            <person name="Perez-Perez A."/>
            <person name="Ottenwaelder B."/>
            <person name="Duchemin D."/>
            <person name="Cooke R."/>
            <person name="Laudie M."/>
            <person name="Berger-Llauro C."/>
            <person name="Purnelle B."/>
            <person name="Masuy D."/>
            <person name="de Haan M."/>
            <person name="Maarse A.C."/>
            <person name="Alcaraz J.-P."/>
            <person name="Cottet A."/>
            <person name="Casacuberta E."/>
            <person name="Monfort A."/>
            <person name="Argiriou A."/>
            <person name="Flores M."/>
            <person name="Liguori R."/>
            <person name="Vitale D."/>
            <person name="Mannhaupt G."/>
            <person name="Haase D."/>
            <person name="Schoof H."/>
            <person name="Rudd S."/>
            <person name="Zaccaria P."/>
            <person name="Mewes H.-W."/>
            <person name="Mayer K.F.X."/>
            <person name="Kaul S."/>
            <person name="Town C.D."/>
            <person name="Koo H.L."/>
            <person name="Tallon L.J."/>
            <person name="Jenkins J."/>
            <person name="Rooney T."/>
            <person name="Rizzo M."/>
            <person name="Walts A."/>
            <person name="Utterback T."/>
            <person name="Fujii C.Y."/>
            <person name="Shea T.P."/>
            <person name="Creasy T.H."/>
            <person name="Haas B."/>
            <person name="Maiti R."/>
            <person name="Wu D."/>
            <person name="Peterson J."/>
            <person name="Van Aken S."/>
            <person name="Pai G."/>
            <person name="Militscher J."/>
            <person name="Sellers P."/>
            <person name="Gill J.E."/>
            <person name="Feldblyum T.V."/>
            <person name="Preuss D."/>
            <person name="Lin X."/>
            <person name="Nierman W.C."/>
            <person name="Salzberg S.L."/>
            <person name="White O."/>
            <person name="Venter J.C."/>
            <person name="Fraser C.M."/>
            <person name="Kaneko T."/>
            <person name="Nakamura Y."/>
            <person name="Sato S."/>
            <person name="Kato T."/>
            <person name="Asamizu E."/>
            <person name="Sasamoto S."/>
            <person name="Kimura T."/>
            <person name="Idesawa K."/>
            <person name="Kawashima K."/>
            <person name="Kishida Y."/>
            <person name="Kiyokawa C."/>
            <person name="Kohara M."/>
            <person name="Matsumoto M."/>
            <person name="Matsuno A."/>
            <person name="Muraki A."/>
            <person name="Nakayama S."/>
            <person name="Nakazaki N."/>
            <person name="Shinpo S."/>
            <person name="Takeuchi C."/>
            <person name="Wada T."/>
            <person name="Watanabe A."/>
            <person name="Yamada M."/>
            <person name="Yasuda M."/>
            <person name="Tabata S."/>
        </authorList>
    </citation>
    <scope>NUCLEOTIDE SEQUENCE [LARGE SCALE GENOMIC DNA]</scope>
    <source>
        <strain>cv. Columbia</strain>
    </source>
</reference>
<reference key="3">
    <citation type="journal article" date="2017" name="Plant J.">
        <title>Araport11: a complete reannotation of the Arabidopsis thaliana reference genome.</title>
        <authorList>
            <person name="Cheng C.Y."/>
            <person name="Krishnakumar V."/>
            <person name="Chan A.P."/>
            <person name="Thibaud-Nissen F."/>
            <person name="Schobel S."/>
            <person name="Town C.D."/>
        </authorList>
    </citation>
    <scope>GENOME REANNOTATION</scope>
    <source>
        <strain>cv. Columbia</strain>
    </source>
</reference>
<proteinExistence type="evidence at transcript level"/>
<sequence>MTDKEESNHSSEVGAVRSLQETPTWALATVCFFFIAVSICLERLINLLSTRLKKNRKTSLLEAVEKLKSVLMVLGFMSLMLNVTEGEVSKICIPIKYANRMLPCRKTIKSHNDVSEDDDDDDGDNHDNSFFHQCSSKGKTSLISEEGLTQLSYFFFVLACMHILCNLAILLLGMAKMRKWNSWEKETQTVEYLAANDPNRFRITRDTTFARRHLSSWTETSFQLWIKCFFRQFYNSVAKVDYLTLRHGFIFAHVSSNNAFNFQNYIQRSLHEDFKTVVGISPLMWLTVVIFMLLDVSGWRVYFYMSFVPLIIVLVIGTKLEMIVAKMAVTIKENNSVIRGTPLVESNDTHFWFSNPRFLLSILHYTLFLNTFEMAFIVWITWQFGINSCYHDNQGIIITRLVLAVTVQFLSSYITLPLYAIVTQMGSSYKRAILEEQLANVLRHWQGMVRDKKKTIQTPDTDNNSNNNNGDIDSGESPVQTEVASEFRFSGRQSPILQEIQIQEKTER</sequence>
<protein>
    <recommendedName>
        <fullName>MLO-like protein 3</fullName>
        <shortName>AtMlo3</shortName>
    </recommendedName>
</protein>
<organism>
    <name type="scientific">Arabidopsis thaliana</name>
    <name type="common">Mouse-ear cress</name>
    <dbReference type="NCBI Taxonomy" id="3702"/>
    <lineage>
        <taxon>Eukaryota</taxon>
        <taxon>Viridiplantae</taxon>
        <taxon>Streptophyta</taxon>
        <taxon>Embryophyta</taxon>
        <taxon>Tracheophyta</taxon>
        <taxon>Spermatophyta</taxon>
        <taxon>Magnoliopsida</taxon>
        <taxon>eudicotyledons</taxon>
        <taxon>Gunneridae</taxon>
        <taxon>Pentapetalae</taxon>
        <taxon>rosids</taxon>
        <taxon>malvids</taxon>
        <taxon>Brassicales</taxon>
        <taxon>Brassicaceae</taxon>
        <taxon>Camelineae</taxon>
        <taxon>Arabidopsis</taxon>
    </lineage>
</organism>
<comment type="function">
    <text evidence="1">May be involved in modulation of pathogen defense and leaf cell death. Activity seems to be regulated by Ca(2+)-dependent calmodulin binding and seems not to require heterotrimeric G proteins (By similarity).</text>
</comment>
<comment type="subcellular location">
    <subcellularLocation>
        <location evidence="1">Membrane</location>
        <topology evidence="1">Multi-pass membrane protein</topology>
    </subcellularLocation>
</comment>
<comment type="domain">
    <text evidence="1">The C-terminus contains a calmodulin-binding domain, which binds calmodulin in a calcium-dependent fashion.</text>
</comment>
<comment type="similarity">
    <text evidence="5">Belongs to the MLO family.</text>
</comment>
<comment type="sequence caution" evidence="5">
    <conflict type="erroneous gene model prediction">
        <sequence resource="EMBL-CDS" id="CAB72478"/>
    </conflict>
</comment>
<feature type="chain" id="PRO_0000209933" description="MLO-like protein 3">
    <location>
        <begin position="1"/>
        <end position="508"/>
    </location>
</feature>
<feature type="topological domain" description="Extracellular" evidence="3">
    <location>
        <begin position="1"/>
        <end position="21"/>
    </location>
</feature>
<feature type="transmembrane region" description="Helical; Name=1" evidence="3">
    <location>
        <begin position="22"/>
        <end position="42"/>
    </location>
</feature>
<feature type="topological domain" description="Cytoplasmic" evidence="3">
    <location>
        <begin position="43"/>
        <end position="68"/>
    </location>
</feature>
<feature type="transmembrane region" description="Helical; Name=2" evidence="3">
    <location>
        <begin position="69"/>
        <end position="89"/>
    </location>
</feature>
<feature type="topological domain" description="Extracellular" evidence="3">
    <location>
        <begin position="90"/>
        <end position="153"/>
    </location>
</feature>
<feature type="transmembrane region" description="Helical; Name=3" evidence="3">
    <location>
        <begin position="154"/>
        <end position="174"/>
    </location>
</feature>
<feature type="topological domain" description="Cytoplasmic" evidence="3">
    <location>
        <begin position="175"/>
        <end position="275"/>
    </location>
</feature>
<feature type="transmembrane region" description="Helical; Name=4" evidence="3">
    <location>
        <begin position="276"/>
        <end position="296"/>
    </location>
</feature>
<feature type="topological domain" description="Extracellular" evidence="3">
    <location>
        <begin position="297"/>
        <end position="304"/>
    </location>
</feature>
<feature type="transmembrane region" description="Helical; Name=5" evidence="3">
    <location>
        <begin position="305"/>
        <end position="325"/>
    </location>
</feature>
<feature type="topological domain" description="Cytoplasmic" evidence="3">
    <location>
        <begin position="326"/>
        <end position="357"/>
    </location>
</feature>
<feature type="transmembrane region" description="Helical; Name=6" evidence="3">
    <location>
        <begin position="358"/>
        <end position="378"/>
    </location>
</feature>
<feature type="topological domain" description="Extracellular" evidence="3">
    <location>
        <begin position="379"/>
        <end position="401"/>
    </location>
</feature>
<feature type="transmembrane region" description="Helical; Name=7" evidence="3">
    <location>
        <begin position="402"/>
        <end position="422"/>
    </location>
</feature>
<feature type="topological domain" description="Cytoplasmic" evidence="3">
    <location>
        <begin position="423"/>
        <end position="508"/>
    </location>
</feature>
<feature type="region of interest" description="Calmodulin-binding">
    <location>
        <begin position="436"/>
        <end position="457"/>
    </location>
</feature>
<feature type="region of interest" description="Disordered" evidence="4">
    <location>
        <begin position="453"/>
        <end position="492"/>
    </location>
</feature>
<feature type="modified residue" description="Phosphoserine" evidence="2">
    <location>
        <position position="494"/>
    </location>
</feature>
<keyword id="KW-0112">Calmodulin-binding</keyword>
<keyword id="KW-0472">Membrane</keyword>
<keyword id="KW-0568">Pathogenesis-related protein</keyword>
<keyword id="KW-0597">Phosphoprotein</keyword>
<keyword id="KW-0611">Plant defense</keyword>
<keyword id="KW-1185">Reference proteome</keyword>
<keyword id="KW-0812">Transmembrane</keyword>
<keyword id="KW-1133">Transmembrane helix</keyword>
<gene>
    <name type="primary">MLO3</name>
    <name type="ordered locus">At3g45290</name>
    <name type="ORF">F18N11.50</name>
</gene>
<dbReference type="EMBL" id="AF369564">
    <property type="protein sequence ID" value="AAK53796.1"/>
    <property type="molecule type" value="mRNA"/>
</dbReference>
<dbReference type="EMBL" id="AL132953">
    <property type="protein sequence ID" value="CAB72478.1"/>
    <property type="status" value="ALT_SEQ"/>
    <property type="molecule type" value="Genomic_DNA"/>
</dbReference>
<dbReference type="EMBL" id="CP002686">
    <property type="protein sequence ID" value="AEE78019.1"/>
    <property type="molecule type" value="Genomic_DNA"/>
</dbReference>
<dbReference type="PIR" id="T47469">
    <property type="entry name" value="T47469"/>
</dbReference>
<dbReference type="RefSeq" id="NP_566879.1">
    <property type="nucleotide sequence ID" value="NM_114398.2"/>
</dbReference>
<dbReference type="SMR" id="Q94KB9"/>
<dbReference type="BioGRID" id="8987">
    <property type="interactions" value="23"/>
</dbReference>
<dbReference type="FunCoup" id="Q94KB9">
    <property type="interactions" value="1"/>
</dbReference>
<dbReference type="IntAct" id="Q94KB9">
    <property type="interactions" value="22"/>
</dbReference>
<dbReference type="STRING" id="3702.Q94KB9"/>
<dbReference type="PaxDb" id="3702-AT3G45290.1"/>
<dbReference type="ProteomicsDB" id="238711"/>
<dbReference type="EnsemblPlants" id="AT3G45290.1">
    <property type="protein sequence ID" value="AT3G45290.1"/>
    <property type="gene ID" value="AT3G45290"/>
</dbReference>
<dbReference type="GeneID" id="823667"/>
<dbReference type="Gramene" id="AT3G45290.1">
    <property type="protein sequence ID" value="AT3G45290.1"/>
    <property type="gene ID" value="AT3G45290"/>
</dbReference>
<dbReference type="KEGG" id="ath:AT3G45290"/>
<dbReference type="Araport" id="AT3G45290"/>
<dbReference type="TAIR" id="AT3G45290">
    <property type="gene designation" value="MLO3"/>
</dbReference>
<dbReference type="eggNOG" id="ENOG502QW1A">
    <property type="taxonomic scope" value="Eukaryota"/>
</dbReference>
<dbReference type="HOGENOM" id="CLU_024720_1_0_1"/>
<dbReference type="InParanoid" id="Q94KB9"/>
<dbReference type="OMA" id="AIMQIVY"/>
<dbReference type="PhylomeDB" id="Q94KB9"/>
<dbReference type="PRO" id="PR:Q94KB9"/>
<dbReference type="Proteomes" id="UP000006548">
    <property type="component" value="Chromosome 3"/>
</dbReference>
<dbReference type="ExpressionAtlas" id="Q94KB9">
    <property type="expression patterns" value="baseline and differential"/>
</dbReference>
<dbReference type="GO" id="GO:0016020">
    <property type="term" value="C:membrane"/>
    <property type="evidence" value="ECO:0007669"/>
    <property type="project" value="UniProtKB-SubCell"/>
</dbReference>
<dbReference type="GO" id="GO:0005516">
    <property type="term" value="F:calmodulin binding"/>
    <property type="evidence" value="ECO:0007669"/>
    <property type="project" value="UniProtKB-KW"/>
</dbReference>
<dbReference type="GO" id="GO:0006952">
    <property type="term" value="P:defense response"/>
    <property type="evidence" value="ECO:0007669"/>
    <property type="project" value="UniProtKB-KW"/>
</dbReference>
<dbReference type="InterPro" id="IPR004326">
    <property type="entry name" value="Mlo"/>
</dbReference>
<dbReference type="PANTHER" id="PTHR31942">
    <property type="entry name" value="MLO-LIKE PROTEIN 1"/>
    <property type="match status" value="1"/>
</dbReference>
<dbReference type="PANTHER" id="PTHR31942:SF89">
    <property type="entry name" value="MLO-LIKE PROTEIN 3"/>
    <property type="match status" value="1"/>
</dbReference>
<dbReference type="Pfam" id="PF03094">
    <property type="entry name" value="Mlo"/>
    <property type="match status" value="1"/>
</dbReference>
<evidence type="ECO:0000250" key="1"/>
<evidence type="ECO:0000250" key="2">
    <source>
        <dbReference type="UniProtKB" id="Q9SXB6"/>
    </source>
</evidence>
<evidence type="ECO:0000255" key="3"/>
<evidence type="ECO:0000256" key="4">
    <source>
        <dbReference type="SAM" id="MobiDB-lite"/>
    </source>
</evidence>
<evidence type="ECO:0000305" key="5"/>
<name>MLO3_ARATH</name>
<accession>Q94KB9</accession>
<accession>Q9M3E8</accession>